<sequence>MKPRTPPDSPQLFQAVPLVPDFRLELKARKAGHWPVAGADEAGRGPLAGPVVAAAVILDPKRIPEGLNDSKQLSAQRREELFVQILATATVSIASSSSTRIDETDIRKASLDAMRRAICSLAIPASYVLTDGLDVPPGLDCPGQAVIKGDARSVSIAAASIVAKVTRDRMMARAHHVFPDYGFAAHVGYGTAQHRAGIEKLGPCSLHRMSFRPLRKVEDGPQMDELISE</sequence>
<feature type="chain" id="PRO_1000091646" description="Ribonuclease HII">
    <location>
        <begin position="1"/>
        <end position="229"/>
    </location>
</feature>
<feature type="domain" description="RNase H type-2" evidence="2">
    <location>
        <begin position="34"/>
        <end position="223"/>
    </location>
</feature>
<feature type="binding site" evidence="1">
    <location>
        <position position="40"/>
    </location>
    <ligand>
        <name>a divalent metal cation</name>
        <dbReference type="ChEBI" id="CHEBI:60240"/>
    </ligand>
</feature>
<feature type="binding site" evidence="1">
    <location>
        <position position="41"/>
    </location>
    <ligand>
        <name>a divalent metal cation</name>
        <dbReference type="ChEBI" id="CHEBI:60240"/>
    </ligand>
</feature>
<feature type="binding site" evidence="1">
    <location>
        <position position="131"/>
    </location>
    <ligand>
        <name>a divalent metal cation</name>
        <dbReference type="ChEBI" id="CHEBI:60240"/>
    </ligand>
</feature>
<gene>
    <name evidence="1" type="primary">rnhB</name>
    <name type="ordered locus">Rleg2_0516</name>
</gene>
<comment type="function">
    <text evidence="1">Endonuclease that specifically degrades the RNA of RNA-DNA hybrids.</text>
</comment>
<comment type="catalytic activity">
    <reaction evidence="1">
        <text>Endonucleolytic cleavage to 5'-phosphomonoester.</text>
        <dbReference type="EC" id="3.1.26.4"/>
    </reaction>
</comment>
<comment type="cofactor">
    <cofactor evidence="1">
        <name>Mn(2+)</name>
        <dbReference type="ChEBI" id="CHEBI:29035"/>
    </cofactor>
    <cofactor evidence="1">
        <name>Mg(2+)</name>
        <dbReference type="ChEBI" id="CHEBI:18420"/>
    </cofactor>
    <text evidence="1">Manganese or magnesium. Binds 1 divalent metal ion per monomer in the absence of substrate. May bind a second metal ion after substrate binding.</text>
</comment>
<comment type="subcellular location">
    <subcellularLocation>
        <location evidence="1">Cytoplasm</location>
    </subcellularLocation>
</comment>
<comment type="similarity">
    <text evidence="1">Belongs to the RNase HII family.</text>
</comment>
<organism>
    <name type="scientific">Rhizobium leguminosarum bv. trifolii (strain WSM2304)</name>
    <dbReference type="NCBI Taxonomy" id="395492"/>
    <lineage>
        <taxon>Bacteria</taxon>
        <taxon>Pseudomonadati</taxon>
        <taxon>Pseudomonadota</taxon>
        <taxon>Alphaproteobacteria</taxon>
        <taxon>Hyphomicrobiales</taxon>
        <taxon>Rhizobiaceae</taxon>
        <taxon>Rhizobium/Agrobacterium group</taxon>
        <taxon>Rhizobium</taxon>
    </lineage>
</organism>
<keyword id="KW-0963">Cytoplasm</keyword>
<keyword id="KW-0255">Endonuclease</keyword>
<keyword id="KW-0378">Hydrolase</keyword>
<keyword id="KW-0464">Manganese</keyword>
<keyword id="KW-0479">Metal-binding</keyword>
<keyword id="KW-0540">Nuclease</keyword>
<keyword id="KW-1185">Reference proteome</keyword>
<name>RNH2_RHILW</name>
<proteinExistence type="inferred from homology"/>
<reference key="1">
    <citation type="journal article" date="2010" name="Stand. Genomic Sci.">
        <title>Complete genome sequence of Rhizobium leguminosarum bv trifolii strain WSM2304, an effective microsymbiont of the South American clover Trifolium polymorphum.</title>
        <authorList>
            <person name="Reeve W."/>
            <person name="O'Hara G."/>
            <person name="Chain P."/>
            <person name="Ardley J."/>
            <person name="Brau L."/>
            <person name="Nandesena K."/>
            <person name="Tiwari R."/>
            <person name="Malfatti S."/>
            <person name="Kiss H."/>
            <person name="Lapidus A."/>
            <person name="Copeland A."/>
            <person name="Nolan M."/>
            <person name="Land M."/>
            <person name="Ivanova N."/>
            <person name="Mavromatis K."/>
            <person name="Markowitz V."/>
            <person name="Kyrpides N."/>
            <person name="Melino V."/>
            <person name="Denton M."/>
            <person name="Yates R."/>
            <person name="Howieson J."/>
        </authorList>
    </citation>
    <scope>NUCLEOTIDE SEQUENCE [LARGE SCALE GENOMIC DNA]</scope>
    <source>
        <strain>WSM2304</strain>
    </source>
</reference>
<accession>B5ZS20</accession>
<protein>
    <recommendedName>
        <fullName evidence="1">Ribonuclease HII</fullName>
        <shortName evidence="1">RNase HII</shortName>
        <ecNumber evidence="1">3.1.26.4</ecNumber>
    </recommendedName>
</protein>
<evidence type="ECO:0000255" key="1">
    <source>
        <dbReference type="HAMAP-Rule" id="MF_00052"/>
    </source>
</evidence>
<evidence type="ECO:0000255" key="2">
    <source>
        <dbReference type="PROSITE-ProRule" id="PRU01319"/>
    </source>
</evidence>
<dbReference type="EC" id="3.1.26.4" evidence="1"/>
<dbReference type="EMBL" id="CP001191">
    <property type="protein sequence ID" value="ACI53813.1"/>
    <property type="molecule type" value="Genomic_DNA"/>
</dbReference>
<dbReference type="RefSeq" id="WP_012556747.1">
    <property type="nucleotide sequence ID" value="NC_011369.1"/>
</dbReference>
<dbReference type="SMR" id="B5ZS20"/>
<dbReference type="STRING" id="395492.Rleg2_0516"/>
<dbReference type="KEGG" id="rlt:Rleg2_0516"/>
<dbReference type="eggNOG" id="COG0164">
    <property type="taxonomic scope" value="Bacteria"/>
</dbReference>
<dbReference type="HOGENOM" id="CLU_036532_3_2_5"/>
<dbReference type="Proteomes" id="UP000008330">
    <property type="component" value="Chromosome"/>
</dbReference>
<dbReference type="GO" id="GO:0005737">
    <property type="term" value="C:cytoplasm"/>
    <property type="evidence" value="ECO:0007669"/>
    <property type="project" value="UniProtKB-SubCell"/>
</dbReference>
<dbReference type="GO" id="GO:0032299">
    <property type="term" value="C:ribonuclease H2 complex"/>
    <property type="evidence" value="ECO:0007669"/>
    <property type="project" value="TreeGrafter"/>
</dbReference>
<dbReference type="GO" id="GO:0030145">
    <property type="term" value="F:manganese ion binding"/>
    <property type="evidence" value="ECO:0007669"/>
    <property type="project" value="UniProtKB-UniRule"/>
</dbReference>
<dbReference type="GO" id="GO:0003723">
    <property type="term" value="F:RNA binding"/>
    <property type="evidence" value="ECO:0007669"/>
    <property type="project" value="InterPro"/>
</dbReference>
<dbReference type="GO" id="GO:0004523">
    <property type="term" value="F:RNA-DNA hybrid ribonuclease activity"/>
    <property type="evidence" value="ECO:0007669"/>
    <property type="project" value="UniProtKB-UniRule"/>
</dbReference>
<dbReference type="GO" id="GO:0043137">
    <property type="term" value="P:DNA replication, removal of RNA primer"/>
    <property type="evidence" value="ECO:0007669"/>
    <property type="project" value="TreeGrafter"/>
</dbReference>
<dbReference type="GO" id="GO:0006298">
    <property type="term" value="P:mismatch repair"/>
    <property type="evidence" value="ECO:0007669"/>
    <property type="project" value="TreeGrafter"/>
</dbReference>
<dbReference type="CDD" id="cd07182">
    <property type="entry name" value="RNase_HII_bacteria_HII_like"/>
    <property type="match status" value="1"/>
</dbReference>
<dbReference type="Gene3D" id="3.30.420.10">
    <property type="entry name" value="Ribonuclease H-like superfamily/Ribonuclease H"/>
    <property type="match status" value="1"/>
</dbReference>
<dbReference type="HAMAP" id="MF_00052_B">
    <property type="entry name" value="RNase_HII_B"/>
    <property type="match status" value="1"/>
</dbReference>
<dbReference type="InterPro" id="IPR022898">
    <property type="entry name" value="RNase_HII"/>
</dbReference>
<dbReference type="InterPro" id="IPR001352">
    <property type="entry name" value="RNase_HII/HIII"/>
</dbReference>
<dbReference type="InterPro" id="IPR024567">
    <property type="entry name" value="RNase_HII/HIII_dom"/>
</dbReference>
<dbReference type="InterPro" id="IPR012337">
    <property type="entry name" value="RNaseH-like_sf"/>
</dbReference>
<dbReference type="InterPro" id="IPR036397">
    <property type="entry name" value="RNaseH_sf"/>
</dbReference>
<dbReference type="NCBIfam" id="NF000595">
    <property type="entry name" value="PRK00015.1-3"/>
    <property type="match status" value="1"/>
</dbReference>
<dbReference type="PANTHER" id="PTHR10954">
    <property type="entry name" value="RIBONUCLEASE H2 SUBUNIT A"/>
    <property type="match status" value="1"/>
</dbReference>
<dbReference type="PANTHER" id="PTHR10954:SF18">
    <property type="entry name" value="RIBONUCLEASE HII"/>
    <property type="match status" value="1"/>
</dbReference>
<dbReference type="Pfam" id="PF01351">
    <property type="entry name" value="RNase_HII"/>
    <property type="match status" value="1"/>
</dbReference>
<dbReference type="SUPFAM" id="SSF53098">
    <property type="entry name" value="Ribonuclease H-like"/>
    <property type="match status" value="1"/>
</dbReference>
<dbReference type="PROSITE" id="PS51975">
    <property type="entry name" value="RNASE_H_2"/>
    <property type="match status" value="1"/>
</dbReference>